<sequence>MPAIVIVGAQWGDEGKGKATDLLGGRVDYVVKPNGGNNAGHTVVVGGEKYELKLLPAGILSPNAIPIIGNGCVVNLEALFQEIDGLEARGADTSRLRVSANAHLVAPYHQVLDKVTERFLGSRAIGTTGRGIGPAYMDKVARLGIRVQDVFDESILRQKVEGSLRQKNELLVKVYNRRDIIADEIVEYFLSFAERLRPLVIDSTLELNNALDEGKVVLMEGGQATFLDVDHGTYPFVTSSNPTAGGASVGSGIGPTRISRSIGIIKAYTTRVGAGPFPTELFDEMGVYLQKTGGEFGVNTGRPRRCGWYDAVLARHASRVNGFTDYFVTKLDVLTGIEQIPVCVAYDVDGVRHDEMPMTQTEFHHAVPIFEYFDGWTEDITGARTLEDLPENARNYVLALEKLSGTRFSAIGVGPDRDQTIVVHDLIND</sequence>
<evidence type="ECO:0000255" key="1">
    <source>
        <dbReference type="HAMAP-Rule" id="MF_00011"/>
    </source>
</evidence>
<comment type="function">
    <text evidence="1">Plays an important role in the de novo pathway of purine nucleotide biosynthesis. Catalyzes the first committed step in the biosynthesis of AMP from IMP.</text>
</comment>
<comment type="catalytic activity">
    <reaction evidence="1">
        <text>IMP + L-aspartate + GTP = N(6)-(1,2-dicarboxyethyl)-AMP + GDP + phosphate + 2 H(+)</text>
        <dbReference type="Rhea" id="RHEA:15753"/>
        <dbReference type="ChEBI" id="CHEBI:15378"/>
        <dbReference type="ChEBI" id="CHEBI:29991"/>
        <dbReference type="ChEBI" id="CHEBI:37565"/>
        <dbReference type="ChEBI" id="CHEBI:43474"/>
        <dbReference type="ChEBI" id="CHEBI:57567"/>
        <dbReference type="ChEBI" id="CHEBI:58053"/>
        <dbReference type="ChEBI" id="CHEBI:58189"/>
        <dbReference type="EC" id="6.3.4.4"/>
    </reaction>
</comment>
<comment type="cofactor">
    <cofactor evidence="1">
        <name>Mg(2+)</name>
        <dbReference type="ChEBI" id="CHEBI:18420"/>
    </cofactor>
    <text evidence="1">Binds 1 Mg(2+) ion per subunit.</text>
</comment>
<comment type="pathway">
    <text evidence="1">Purine metabolism; AMP biosynthesis via de novo pathway; AMP from IMP: step 1/2.</text>
</comment>
<comment type="subunit">
    <text evidence="1">Homodimer.</text>
</comment>
<comment type="subcellular location">
    <subcellularLocation>
        <location evidence="1">Cytoplasm</location>
    </subcellularLocation>
</comment>
<comment type="similarity">
    <text evidence="1">Belongs to the adenylosuccinate synthetase family.</text>
</comment>
<feature type="chain" id="PRO_1000000776" description="Adenylosuccinate synthetase">
    <location>
        <begin position="1"/>
        <end position="429"/>
    </location>
</feature>
<feature type="active site" description="Proton acceptor" evidence="1">
    <location>
        <position position="13"/>
    </location>
</feature>
<feature type="active site" description="Proton donor" evidence="1">
    <location>
        <position position="41"/>
    </location>
</feature>
<feature type="binding site" evidence="1">
    <location>
        <begin position="12"/>
        <end position="18"/>
    </location>
    <ligand>
        <name>GTP</name>
        <dbReference type="ChEBI" id="CHEBI:37565"/>
    </ligand>
</feature>
<feature type="binding site" description="in other chain" evidence="1">
    <location>
        <begin position="13"/>
        <end position="16"/>
    </location>
    <ligand>
        <name>IMP</name>
        <dbReference type="ChEBI" id="CHEBI:58053"/>
        <note>ligand shared between dimeric partners</note>
    </ligand>
</feature>
<feature type="binding site" evidence="1">
    <location>
        <position position="13"/>
    </location>
    <ligand>
        <name>Mg(2+)</name>
        <dbReference type="ChEBI" id="CHEBI:18420"/>
    </ligand>
</feature>
<feature type="binding site" description="in other chain" evidence="1">
    <location>
        <begin position="38"/>
        <end position="41"/>
    </location>
    <ligand>
        <name>IMP</name>
        <dbReference type="ChEBI" id="CHEBI:58053"/>
        <note>ligand shared between dimeric partners</note>
    </ligand>
</feature>
<feature type="binding site" evidence="1">
    <location>
        <begin position="40"/>
        <end position="42"/>
    </location>
    <ligand>
        <name>GTP</name>
        <dbReference type="ChEBI" id="CHEBI:37565"/>
    </ligand>
</feature>
<feature type="binding site" evidence="1">
    <location>
        <position position="40"/>
    </location>
    <ligand>
        <name>Mg(2+)</name>
        <dbReference type="ChEBI" id="CHEBI:18420"/>
    </ligand>
</feature>
<feature type="binding site" description="in other chain" evidence="1">
    <location>
        <position position="128"/>
    </location>
    <ligand>
        <name>IMP</name>
        <dbReference type="ChEBI" id="CHEBI:58053"/>
        <note>ligand shared between dimeric partners</note>
    </ligand>
</feature>
<feature type="binding site" evidence="1">
    <location>
        <position position="142"/>
    </location>
    <ligand>
        <name>IMP</name>
        <dbReference type="ChEBI" id="CHEBI:58053"/>
        <note>ligand shared between dimeric partners</note>
    </ligand>
</feature>
<feature type="binding site" description="in other chain" evidence="1">
    <location>
        <position position="223"/>
    </location>
    <ligand>
        <name>IMP</name>
        <dbReference type="ChEBI" id="CHEBI:58053"/>
        <note>ligand shared between dimeric partners</note>
    </ligand>
</feature>
<feature type="binding site" description="in other chain" evidence="1">
    <location>
        <position position="238"/>
    </location>
    <ligand>
        <name>IMP</name>
        <dbReference type="ChEBI" id="CHEBI:58053"/>
        <note>ligand shared between dimeric partners</note>
    </ligand>
</feature>
<feature type="binding site" evidence="1">
    <location>
        <begin position="298"/>
        <end position="304"/>
    </location>
    <ligand>
        <name>substrate</name>
    </ligand>
</feature>
<feature type="binding site" description="in other chain" evidence="1">
    <location>
        <position position="302"/>
    </location>
    <ligand>
        <name>IMP</name>
        <dbReference type="ChEBI" id="CHEBI:58053"/>
        <note>ligand shared between dimeric partners</note>
    </ligand>
</feature>
<feature type="binding site" evidence="1">
    <location>
        <position position="304"/>
    </location>
    <ligand>
        <name>GTP</name>
        <dbReference type="ChEBI" id="CHEBI:37565"/>
    </ligand>
</feature>
<feature type="binding site" evidence="1">
    <location>
        <begin position="330"/>
        <end position="332"/>
    </location>
    <ligand>
        <name>GTP</name>
        <dbReference type="ChEBI" id="CHEBI:37565"/>
    </ligand>
</feature>
<feature type="binding site" evidence="1">
    <location>
        <begin position="412"/>
        <end position="414"/>
    </location>
    <ligand>
        <name>GTP</name>
        <dbReference type="ChEBI" id="CHEBI:37565"/>
    </ligand>
</feature>
<reference key="1">
    <citation type="journal article" date="2006" name="PLoS Genet.">
        <title>Secrets of soil survival revealed by the genome sequence of Arthrobacter aurescens TC1.</title>
        <authorList>
            <person name="Mongodin E.F."/>
            <person name="Shapir N."/>
            <person name="Daugherty S.C."/>
            <person name="DeBoy R.T."/>
            <person name="Emerson J.B."/>
            <person name="Shvartzbeyn A."/>
            <person name="Radune D."/>
            <person name="Vamathevan J."/>
            <person name="Riggs F."/>
            <person name="Grinberg V."/>
            <person name="Khouri H.M."/>
            <person name="Wackett L.P."/>
            <person name="Nelson K.E."/>
            <person name="Sadowsky M.J."/>
        </authorList>
    </citation>
    <scope>NUCLEOTIDE SEQUENCE [LARGE SCALE GENOMIC DNA]</scope>
    <source>
        <strain>TC1</strain>
    </source>
</reference>
<gene>
    <name evidence="1" type="primary">purA</name>
    <name type="ordered locus">AAur_0563</name>
</gene>
<proteinExistence type="inferred from homology"/>
<name>PURA_PAEAT</name>
<keyword id="KW-0963">Cytoplasm</keyword>
<keyword id="KW-0342">GTP-binding</keyword>
<keyword id="KW-0436">Ligase</keyword>
<keyword id="KW-0460">Magnesium</keyword>
<keyword id="KW-0479">Metal-binding</keyword>
<keyword id="KW-0547">Nucleotide-binding</keyword>
<keyword id="KW-0658">Purine biosynthesis</keyword>
<dbReference type="EC" id="6.3.4.4" evidence="1"/>
<dbReference type="EMBL" id="CP000474">
    <property type="protein sequence ID" value="ABM06751.1"/>
    <property type="molecule type" value="Genomic_DNA"/>
</dbReference>
<dbReference type="RefSeq" id="WP_011773318.1">
    <property type="nucleotide sequence ID" value="NC_008711.1"/>
</dbReference>
<dbReference type="SMR" id="A1R2A8"/>
<dbReference type="STRING" id="290340.AAur_0563"/>
<dbReference type="KEGG" id="aau:AAur_0563"/>
<dbReference type="eggNOG" id="COG0104">
    <property type="taxonomic scope" value="Bacteria"/>
</dbReference>
<dbReference type="HOGENOM" id="CLU_029848_0_0_11"/>
<dbReference type="OrthoDB" id="9807553at2"/>
<dbReference type="UniPathway" id="UPA00075">
    <property type="reaction ID" value="UER00335"/>
</dbReference>
<dbReference type="Proteomes" id="UP000000637">
    <property type="component" value="Chromosome"/>
</dbReference>
<dbReference type="GO" id="GO:0005737">
    <property type="term" value="C:cytoplasm"/>
    <property type="evidence" value="ECO:0007669"/>
    <property type="project" value="UniProtKB-SubCell"/>
</dbReference>
<dbReference type="GO" id="GO:0004019">
    <property type="term" value="F:adenylosuccinate synthase activity"/>
    <property type="evidence" value="ECO:0007669"/>
    <property type="project" value="UniProtKB-UniRule"/>
</dbReference>
<dbReference type="GO" id="GO:0005525">
    <property type="term" value="F:GTP binding"/>
    <property type="evidence" value="ECO:0007669"/>
    <property type="project" value="UniProtKB-UniRule"/>
</dbReference>
<dbReference type="GO" id="GO:0000287">
    <property type="term" value="F:magnesium ion binding"/>
    <property type="evidence" value="ECO:0007669"/>
    <property type="project" value="UniProtKB-UniRule"/>
</dbReference>
<dbReference type="GO" id="GO:0044208">
    <property type="term" value="P:'de novo' AMP biosynthetic process"/>
    <property type="evidence" value="ECO:0007669"/>
    <property type="project" value="UniProtKB-UniRule"/>
</dbReference>
<dbReference type="GO" id="GO:0046040">
    <property type="term" value="P:IMP metabolic process"/>
    <property type="evidence" value="ECO:0007669"/>
    <property type="project" value="TreeGrafter"/>
</dbReference>
<dbReference type="CDD" id="cd03108">
    <property type="entry name" value="AdSS"/>
    <property type="match status" value="1"/>
</dbReference>
<dbReference type="FunFam" id="1.10.300.10:FF:000001">
    <property type="entry name" value="Adenylosuccinate synthetase"/>
    <property type="match status" value="1"/>
</dbReference>
<dbReference type="FunFam" id="3.90.170.10:FF:000001">
    <property type="entry name" value="Adenylosuccinate synthetase"/>
    <property type="match status" value="1"/>
</dbReference>
<dbReference type="Gene3D" id="3.40.440.10">
    <property type="entry name" value="Adenylosuccinate Synthetase, subunit A, domain 1"/>
    <property type="match status" value="1"/>
</dbReference>
<dbReference type="Gene3D" id="1.10.300.10">
    <property type="entry name" value="Adenylosuccinate Synthetase, subunit A, domain 2"/>
    <property type="match status" value="1"/>
</dbReference>
<dbReference type="Gene3D" id="3.90.170.10">
    <property type="entry name" value="Adenylosuccinate Synthetase, subunit A, domain 3"/>
    <property type="match status" value="1"/>
</dbReference>
<dbReference type="HAMAP" id="MF_00011">
    <property type="entry name" value="Adenylosucc_synth"/>
    <property type="match status" value="1"/>
</dbReference>
<dbReference type="InterPro" id="IPR018220">
    <property type="entry name" value="Adenylosuccin_syn_GTP-bd"/>
</dbReference>
<dbReference type="InterPro" id="IPR033128">
    <property type="entry name" value="Adenylosuccin_syn_Lys_AS"/>
</dbReference>
<dbReference type="InterPro" id="IPR042109">
    <property type="entry name" value="Adenylosuccinate_synth_dom1"/>
</dbReference>
<dbReference type="InterPro" id="IPR042110">
    <property type="entry name" value="Adenylosuccinate_synth_dom2"/>
</dbReference>
<dbReference type="InterPro" id="IPR042111">
    <property type="entry name" value="Adenylosuccinate_synth_dom3"/>
</dbReference>
<dbReference type="InterPro" id="IPR001114">
    <property type="entry name" value="Adenylosuccinate_synthetase"/>
</dbReference>
<dbReference type="InterPro" id="IPR027417">
    <property type="entry name" value="P-loop_NTPase"/>
</dbReference>
<dbReference type="NCBIfam" id="NF002223">
    <property type="entry name" value="PRK01117.1"/>
    <property type="match status" value="1"/>
</dbReference>
<dbReference type="NCBIfam" id="TIGR00184">
    <property type="entry name" value="purA"/>
    <property type="match status" value="1"/>
</dbReference>
<dbReference type="PANTHER" id="PTHR11846">
    <property type="entry name" value="ADENYLOSUCCINATE SYNTHETASE"/>
    <property type="match status" value="1"/>
</dbReference>
<dbReference type="PANTHER" id="PTHR11846:SF0">
    <property type="entry name" value="ADENYLOSUCCINATE SYNTHETASE"/>
    <property type="match status" value="1"/>
</dbReference>
<dbReference type="Pfam" id="PF00709">
    <property type="entry name" value="Adenylsucc_synt"/>
    <property type="match status" value="1"/>
</dbReference>
<dbReference type="SMART" id="SM00788">
    <property type="entry name" value="Adenylsucc_synt"/>
    <property type="match status" value="1"/>
</dbReference>
<dbReference type="SUPFAM" id="SSF52540">
    <property type="entry name" value="P-loop containing nucleoside triphosphate hydrolases"/>
    <property type="match status" value="1"/>
</dbReference>
<dbReference type="PROSITE" id="PS01266">
    <property type="entry name" value="ADENYLOSUCCIN_SYN_1"/>
    <property type="match status" value="1"/>
</dbReference>
<dbReference type="PROSITE" id="PS00513">
    <property type="entry name" value="ADENYLOSUCCIN_SYN_2"/>
    <property type="match status" value="1"/>
</dbReference>
<organism>
    <name type="scientific">Paenarthrobacter aurescens (strain TC1)</name>
    <dbReference type="NCBI Taxonomy" id="290340"/>
    <lineage>
        <taxon>Bacteria</taxon>
        <taxon>Bacillati</taxon>
        <taxon>Actinomycetota</taxon>
        <taxon>Actinomycetes</taxon>
        <taxon>Micrococcales</taxon>
        <taxon>Micrococcaceae</taxon>
        <taxon>Paenarthrobacter</taxon>
    </lineage>
</organism>
<accession>A1R2A8</accession>
<protein>
    <recommendedName>
        <fullName evidence="1">Adenylosuccinate synthetase</fullName>
        <shortName evidence="1">AMPSase</shortName>
        <shortName evidence="1">AdSS</shortName>
        <ecNumber evidence="1">6.3.4.4</ecNumber>
    </recommendedName>
    <alternativeName>
        <fullName evidence="1">IMP--aspartate ligase</fullName>
    </alternativeName>
</protein>